<evidence type="ECO:0000255" key="1"/>
<evidence type="ECO:0000255" key="2">
    <source>
        <dbReference type="PROSITE-ProRule" id="PRU00140"/>
    </source>
</evidence>
<evidence type="ECO:0000256" key="3">
    <source>
        <dbReference type="SAM" id="MobiDB-lite"/>
    </source>
</evidence>
<evidence type="ECO:0000269" key="4">
    <source>
    </source>
</evidence>
<evidence type="ECO:0000269" key="5">
    <source>
    </source>
</evidence>
<evidence type="ECO:0000269" key="6">
    <source>
    </source>
</evidence>
<evidence type="ECO:0000269" key="7">
    <source>
    </source>
</evidence>
<evidence type="ECO:0000269" key="8">
    <source>
    </source>
</evidence>
<evidence type="ECO:0000269" key="9">
    <source>
    </source>
</evidence>
<evidence type="ECO:0000269" key="10">
    <source>
    </source>
</evidence>
<evidence type="ECO:0000269" key="11">
    <source>
    </source>
</evidence>
<evidence type="ECO:0000269" key="12">
    <source>
    </source>
</evidence>
<evidence type="ECO:0000305" key="13"/>
<evidence type="ECO:0007829" key="14">
    <source>
        <dbReference type="PDB" id="1WA9"/>
    </source>
</evidence>
<evidence type="ECO:0007829" key="15">
    <source>
        <dbReference type="PDB" id="3RTY"/>
    </source>
</evidence>
<proteinExistence type="evidence at protein level"/>
<comment type="function">
    <text evidence="8">Essential for biological clock functions. Determines the period length of circadian and ultradian rhythms; an increase in PER dosage leads to shortened circadian rhythms and a decrease leads to lengthened circadian rhythms. Essential for the circadian rhythmicity of locomotor activity, eclosion behavior, and for the rhythmic component of the male courtship song that originates in the thoracic nervous system. The biological cycle depends on the rhythmic formation and nuclear localization of the TIM-PER complex. Light induces the degradation of TIM, which promotes elimination of PER. Nuclear activity of the heterodimer coordinatively regulates PER and TIM transcription through a negative feedback loop. Behaves as a negative element in circadian transcriptional loop. Does not appear to bind DNA, suggesting indirect transcriptional inhibition. Required for binding of cwo to the E box regions in the promoters of target genes of the transcriptional activator Clock, probably by binding to Clock-cycle heterodimers, reducing their affinity for E box binding and allowing cwo to bind instead (PubMed:27814361).</text>
</comment>
<comment type="subunit">
    <text evidence="6">Forms a heterodimer with timeless (TIM); the complex then translocates into the nucleus. A proportion of the protein exists as homodimer.</text>
</comment>
<comment type="interaction">
    <interactant intactId="EBI-15718452">
        <id>P07663-1</id>
    </interactant>
    <interactant intactId="EBI-15718452">
        <id>P07663-1</id>
        <label>per</label>
    </interactant>
    <organismsDiffer>false</organismsDiffer>
    <experiments>3</experiments>
</comment>
<comment type="interaction">
    <interactant intactId="EBI-15718452">
        <id>P07663-1</id>
    </interactant>
    <interactant intactId="EBI-266295">
        <id>P49021</id>
        <label>tim</label>
    </interactant>
    <organismsDiffer>false</organismsDiffer>
    <experiments>2</experiments>
</comment>
<comment type="subcellular location">
    <subcellularLocation>
        <location evidence="6 7 11">Nucleus</location>
    </subcellularLocation>
    <subcellularLocation>
        <location>Cytoplasm</location>
        <location>Perinuclear region</location>
    </subcellularLocation>
    <subcellularLocation>
        <location evidence="6 7 11">Cytoplasm</location>
        <location evidence="6 7 11">Cytosol</location>
    </subcellularLocation>
    <text evidence="6 7 11">Nuclear at specific periods of the day (PubMed:15629718, PubMed:24210908, PubMed:36994075). First accumulates in the perinuclear region about one hour before translocation into the nucleus. Interaction with Tim is required for nuclear localization. In photoreceptors, widely expressed throughout the cytosol during the day and then in the evening localizes to the nuclei (PubMed:24210908, PubMed:36994075).</text>
</comment>
<comment type="alternative products">
    <event type="alternative splicing"/>
    <isoform>
        <id>P07663-1</id>
        <name>PER-A-long</name>
        <name>perA</name>
        <sequence type="displayed"/>
    </isoform>
    <isoform>
        <id>P07663-2</id>
        <name>PER-A-short</name>
        <sequence type="described" ref="VSP_004657"/>
    </isoform>
    <isoform>
        <id>P07663-3</id>
        <name>PER-B</name>
        <sequence type="described" ref="VSP_004658"/>
    </isoform>
    <isoform>
        <id>P07663-4</id>
        <name>PER-C</name>
        <sequence type="described" ref="VSP_004660"/>
    </isoform>
    <isoform>
        <id>P07663-5</id>
        <name>PER-D</name>
        <sequence type="described" ref="VSP_004659"/>
    </isoform>
    <isoform>
        <id>P07663-6</id>
        <name>PER-E</name>
        <sequence type="described" ref="VSP_004659 VSP_004661"/>
    </isoform>
    <text>Additional isoforms seem to exist.</text>
</comment>
<comment type="tissue specificity">
    <text>Expressed in neural tissues and in several nonneural tissues of the abdomen. Malpighian tubules contain a circadian pacemaker that functions independently of the brain. Expression oscillates in all tissues studied except for the ovary. PER-A isoforms are mainly expressed in adult's head.</text>
</comment>
<comment type="induction">
    <text>Expression is sensitive to temperature but not to light.</text>
</comment>
<comment type="domain">
    <text>Mutations in the PAS domain result in longer circadian rhythms and courtship song (PERL mutation) or makes the flies arrhythmic (PER01 mutation).</text>
</comment>
<comment type="PTM">
    <text evidence="12">Phosphorylated with a circadian rhythmicity, probably by the double-time protein (dbt). Phosphorylation could be implicated in the stability of per monomer and in the formation of heterodimer per-tim.</text>
</comment>
<comment type="polymorphism">
    <text evidence="4 5 10">Contains a remarkable run of alternating Gly-Thr residues which is polymorphic in length. At least three types of Gly-Thr length exist in the natural population, (Gly-Thr)23 (shown here), and two major variants (Gly-Thr)17 and (Gly-Thr)20. This Gly-Thr stretch is implicated in the maintenance of circadian period at different temperatures. Deletion of the repeat leads to a shortening of the courtship song cycle period, and thus could be important for determining features of species-specific mating behavior.</text>
</comment>
<comment type="disruption phenotype">
    <text evidence="9">Rhythmic changes in CCHa1 expression in the brain controlled by the circadian clock are lost.</text>
</comment>
<comment type="sequence caution" evidence="13">
    <conflict type="erroneous gene model prediction">
        <sequence resource="EMBL-CDS" id="CAA27285"/>
    </conflict>
</comment>
<comment type="online information" name="Protein Spotlight">
    <link uri="https://www.proteinspotlight.org/back_issues/006"/>
    <text>The tale of a love song - Issue 6 of January 2001</text>
</comment>
<protein>
    <recommendedName>
        <fullName>Period circadian protein</fullName>
    </recommendedName>
    <alternativeName>
        <fullName>Protein clock-6</fullName>
        <shortName>CLK-6</shortName>
    </alternativeName>
</protein>
<organism>
    <name type="scientific">Drosophila melanogaster</name>
    <name type="common">Fruit fly</name>
    <dbReference type="NCBI Taxonomy" id="7227"/>
    <lineage>
        <taxon>Eukaryota</taxon>
        <taxon>Metazoa</taxon>
        <taxon>Ecdysozoa</taxon>
        <taxon>Arthropoda</taxon>
        <taxon>Hexapoda</taxon>
        <taxon>Insecta</taxon>
        <taxon>Pterygota</taxon>
        <taxon>Neoptera</taxon>
        <taxon>Endopterygota</taxon>
        <taxon>Diptera</taxon>
        <taxon>Brachycera</taxon>
        <taxon>Muscomorpha</taxon>
        <taxon>Ephydroidea</taxon>
        <taxon>Drosophilidae</taxon>
        <taxon>Drosophila</taxon>
        <taxon>Sophophora</taxon>
    </lineage>
</organism>
<sequence>MEGGESTESTHNTKVSDSAYSNSCSNSQSQRSGSSKSRLSGSHSSGSSGYGGKPSTQASSSDMIIKRNKDKSRKKKKNKGAGQGAGQAQTLISASTSLEGRDEEKPRPSGTGCVEQQICRELQDQQHGEDHSEPQAIEQLQQEEEEDQSGSESEADRVEGVAKSEAAQSFPIPSPLSVTIVPPSMGGCGGVGHAAGLDSGLAKFDKTWEAGPGKLESMTGVGAAAAGTGQRGERVKEDSFCCVISMHDGIVLYTTPSITDVLGYPRDMWLGRSFIDFVHLKDRATFASQITTGIPIAESRGSVPKDAKSTFCVMLRRYRGLKSGGFGVIGRPVSYEPFRLGLTFREAPEEARPDNYMVSNGTNMLLVICATPIKSSYKVPDEILSQKSPKFAIRHTATGIISHVDSAAVSALGYLPQDLIGRSIMDFYHHEDLSVMKETYETVMKKGQTAGASFCSKPYRFLIQNGCYVLLETEWTSFVNPWSRKLEFVVGHHRVFQGPKQCNVFEAAPTCKLKISEEAQSRNTRIKEDIVKRLAETVSRPSDTVKQEVSRRCQALASFMETLMDEVSRADLKLELPHENELTVSERDSVMLGEISPHHDYYDSKSSTETPPSYNQLNYNENLLRFFNSKPVTAPAELDPPKTEPPEPRGTCVSGASGPMSPVHEGSGGSGSSGNFTTASNIHMSSVTNTSIAGTGGTGTGTGTGTGTGTGTGTGTGTGTGTGTGTGTGTGTGTGTGTGTGTGNGTNSGTGTGTASSSKGGTAAIPPVTLTESLLNKHNDEMEKFMLKKHRESRGRTGEKSKKSANDTLKMLEYSGPGHGIKRGGSHSWEGEANKPKQQLTLGTDAIKGAAGSAGGAVGTGGVGSGGAGVAGGGGSGTGVAGTPEGRATTTSGTGTPGGAGGGGGAGAAAAAGASSSVGSSTPGPSSYPTCTQNINLWPPFSVGITPPVHSTHTAMAQSSFSSAGLFPTFYYIPASLTPTSPTRSPRMHKHPHKGGTDMPTTSQQAAAAAAQAMPLQYMAGVMYPHPSLFYTHPAAAAATAMMYQPMPFPGMANALQIPERPLGSQSAYNKSVYTTTPASMTKKVPGAFHSVTTPAQVQRPSSQSASVKTEPGSSAAVSDPCKKEVPDSSPIPSVMGDYNSDPPCSSSNPANNKKYTDSNGNSDDMDGSSFSSFYSSFIKTTDGSESPPDTEKDPKHRKLKSMSTSESKIMEHPEEDQTQHGDG</sequence>
<name>PER_DROME</name>
<dbReference type="EMBL" id="M30114">
    <property type="protein sequence ID" value="AAA28752.1"/>
    <property type="molecule type" value="Genomic_DNA"/>
</dbReference>
<dbReference type="EMBL" id="M30114">
    <property type="protein sequence ID" value="AAA28753.1"/>
    <property type="molecule type" value="Genomic_DNA"/>
</dbReference>
<dbReference type="EMBL" id="M30114">
    <property type="protein sequence ID" value="AAA28754.1"/>
    <property type="molecule type" value="Genomic_DNA"/>
</dbReference>
<dbReference type="EMBL" id="AF033029">
    <property type="protein sequence ID" value="AAB87476.1"/>
    <property type="molecule type" value="mRNA"/>
</dbReference>
<dbReference type="EMBL" id="X03636">
    <property type="protein sequence ID" value="CAA27285.1"/>
    <property type="status" value="ALT_SEQ"/>
    <property type="molecule type" value="Genomic_DNA"/>
</dbReference>
<dbReference type="EMBL" id="AE014298">
    <property type="protein sequence ID" value="AAF45804.1"/>
    <property type="molecule type" value="Genomic_DNA"/>
</dbReference>
<dbReference type="EMBL" id="AL024485">
    <property type="protein sequence ID" value="CAA19677.1"/>
    <property type="molecule type" value="Genomic_DNA"/>
</dbReference>
<dbReference type="EMBL" id="AL024485">
    <property type="protein sequence ID" value="CAA19678.1"/>
    <property type="molecule type" value="Genomic_DNA"/>
</dbReference>
<dbReference type="EMBL" id="AL024485">
    <property type="protein sequence ID" value="CAA19679.1"/>
    <property type="molecule type" value="Genomic_DNA"/>
</dbReference>
<dbReference type="EMBL" id="AL024485">
    <property type="protein sequence ID" value="CAA19680.1"/>
    <property type="molecule type" value="Genomic_DNA"/>
</dbReference>
<dbReference type="EMBL" id="AY575847">
    <property type="protein sequence ID" value="AAS89667.1"/>
    <property type="molecule type" value="Genomic_DNA"/>
</dbReference>
<dbReference type="EMBL" id="L07817">
    <property type="protein sequence ID" value="AAA28777.1"/>
    <property type="molecule type" value="Genomic_DNA"/>
</dbReference>
<dbReference type="EMBL" id="L07818">
    <property type="protein sequence ID" value="AAA28776.1"/>
    <property type="molecule type" value="Genomic_DNA"/>
</dbReference>
<dbReference type="EMBL" id="L07819">
    <property type="protein sequence ID" value="AAA28775.1"/>
    <property type="molecule type" value="Genomic_DNA"/>
</dbReference>
<dbReference type="EMBL" id="L07821">
    <property type="protein sequence ID" value="AAA28773.1"/>
    <property type="molecule type" value="Genomic_DNA"/>
</dbReference>
<dbReference type="EMBL" id="L07823">
    <property type="protein sequence ID" value="AAA28771.1"/>
    <property type="molecule type" value="Genomic_DNA"/>
</dbReference>
<dbReference type="EMBL" id="L07825">
    <property type="protein sequence ID" value="AAA28769.1"/>
    <property type="molecule type" value="Genomic_DNA"/>
</dbReference>
<dbReference type="EMBL" id="AB029194">
    <property type="protein sequence ID" value="BAB15868.1"/>
    <property type="molecule type" value="Genomic_DNA"/>
</dbReference>
<dbReference type="EMBL" id="AB029195">
    <property type="protein sequence ID" value="BAB15869.1"/>
    <property type="molecule type" value="Genomic_DNA"/>
</dbReference>
<dbReference type="EMBL" id="AB029196">
    <property type="protein sequence ID" value="BAB15870.1"/>
    <property type="molecule type" value="Genomic_DNA"/>
</dbReference>
<dbReference type="EMBL" id="AB029222">
    <property type="protein sequence ID" value="BAB15896.1"/>
    <property type="molecule type" value="Genomic_DNA"/>
</dbReference>
<dbReference type="EMBL" id="AB029223">
    <property type="protein sequence ID" value="BAB15897.1"/>
    <property type="molecule type" value="Genomic_DNA"/>
</dbReference>
<dbReference type="EMBL" id="AB029224">
    <property type="protein sequence ID" value="BAB15898.1"/>
    <property type="molecule type" value="Genomic_DNA"/>
</dbReference>
<dbReference type="EMBL" id="AB029250">
    <property type="protein sequence ID" value="BAB15924.1"/>
    <property type="molecule type" value="Genomic_DNA"/>
</dbReference>
<dbReference type="EMBL" id="AB029251">
    <property type="protein sequence ID" value="BAB15925.1"/>
    <property type="molecule type" value="Genomic_DNA"/>
</dbReference>
<dbReference type="EMBL" id="AB029252">
    <property type="protein sequence ID" value="BAB15926.1"/>
    <property type="molecule type" value="Genomic_DNA"/>
</dbReference>
<dbReference type="EMBL" id="D00009">
    <property type="protein sequence ID" value="BAA00007.1"/>
    <property type="molecule type" value="Genomic_DNA"/>
</dbReference>
<dbReference type="EMBL" id="AF251241">
    <property type="protein sequence ID" value="AAG44573.1"/>
    <property type="molecule type" value="Genomic_DNA"/>
</dbReference>
<dbReference type="EMBL" id="AY047980">
    <property type="protein sequence ID" value="AAN02289.1"/>
    <property type="molecule type" value="Genomic_DNA"/>
</dbReference>
<dbReference type="EMBL" id="AY047981">
    <property type="protein sequence ID" value="AAN02291.1"/>
    <property type="molecule type" value="Genomic_DNA"/>
</dbReference>
<dbReference type="EMBL" id="AY047982">
    <property type="protein sequence ID" value="AAN02293.1"/>
    <property type="molecule type" value="Genomic_DNA"/>
</dbReference>
<dbReference type="EMBL" id="AY047983">
    <property type="protein sequence ID" value="AAN02295.1"/>
    <property type="molecule type" value="Genomic_DNA"/>
</dbReference>
<dbReference type="EMBL" id="AY047984">
    <property type="protein sequence ID" value="AAN02297.1"/>
    <property type="molecule type" value="Genomic_DNA"/>
</dbReference>
<dbReference type="EMBL" id="AY047985">
    <property type="protein sequence ID" value="AAN02299.1"/>
    <property type="molecule type" value="Genomic_DNA"/>
</dbReference>
<dbReference type="EMBL" id="AY047986">
    <property type="protein sequence ID" value="AAN02301.1"/>
    <property type="molecule type" value="Genomic_DNA"/>
</dbReference>
<dbReference type="EMBL" id="AY047987">
    <property type="protein sequence ID" value="AAN02303.1"/>
    <property type="molecule type" value="Genomic_DNA"/>
</dbReference>
<dbReference type="EMBL" id="AY047988">
    <property type="protein sequence ID" value="AAN02305.1"/>
    <property type="molecule type" value="Genomic_DNA"/>
</dbReference>
<dbReference type="EMBL" id="AY047989">
    <property type="protein sequence ID" value="AAN02307.1"/>
    <property type="molecule type" value="Genomic_DNA"/>
</dbReference>
<dbReference type="EMBL" id="AY047990">
    <property type="protein sequence ID" value="AAN02309.1"/>
    <property type="molecule type" value="Genomic_DNA"/>
</dbReference>
<dbReference type="EMBL" id="AY047991">
    <property type="protein sequence ID" value="AAN02311.1"/>
    <property type="molecule type" value="Genomic_DNA"/>
</dbReference>
<dbReference type="EMBL" id="AY047992">
    <property type="protein sequence ID" value="AAN02313.1"/>
    <property type="molecule type" value="Genomic_DNA"/>
</dbReference>
<dbReference type="EMBL" id="AY047993">
    <property type="protein sequence ID" value="AAN02315.1"/>
    <property type="molecule type" value="Genomic_DNA"/>
</dbReference>
<dbReference type="EMBL" id="AY047994">
    <property type="protein sequence ID" value="AAN02317.1"/>
    <property type="molecule type" value="Genomic_DNA"/>
</dbReference>
<dbReference type="EMBL" id="AY047995">
    <property type="protein sequence ID" value="AAN02319.1"/>
    <property type="molecule type" value="Genomic_DNA"/>
</dbReference>
<dbReference type="EMBL" id="AY047996">
    <property type="protein sequence ID" value="AAN02321.1"/>
    <property type="molecule type" value="Genomic_DNA"/>
</dbReference>
<dbReference type="EMBL" id="AY047997">
    <property type="protein sequence ID" value="AAN02323.1"/>
    <property type="molecule type" value="Genomic_DNA"/>
</dbReference>
<dbReference type="EMBL" id="AY047998">
    <property type="protein sequence ID" value="AAN02325.1"/>
    <property type="molecule type" value="Genomic_DNA"/>
</dbReference>
<dbReference type="EMBL" id="AY047999">
    <property type="protein sequence ID" value="AAN02327.1"/>
    <property type="molecule type" value="Genomic_DNA"/>
</dbReference>
<dbReference type="EMBL" id="AY048000">
    <property type="protein sequence ID" value="AAN02329.1"/>
    <property type="molecule type" value="Genomic_DNA"/>
</dbReference>
<dbReference type="EMBL" id="AY048001">
    <property type="protein sequence ID" value="AAN02331.1"/>
    <property type="molecule type" value="Genomic_DNA"/>
</dbReference>
<dbReference type="EMBL" id="AY048002">
    <property type="protein sequence ID" value="AAN02333.1"/>
    <property type="molecule type" value="Genomic_DNA"/>
</dbReference>
<dbReference type="EMBL" id="AY048003">
    <property type="protein sequence ID" value="AAN02335.1"/>
    <property type="molecule type" value="Genomic_DNA"/>
</dbReference>
<dbReference type="EMBL" id="AY048004">
    <property type="protein sequence ID" value="AAN02337.1"/>
    <property type="molecule type" value="Genomic_DNA"/>
</dbReference>
<dbReference type="EMBL" id="AY048005">
    <property type="protein sequence ID" value="AAN02339.1"/>
    <property type="molecule type" value="Genomic_DNA"/>
</dbReference>
<dbReference type="EMBL" id="AY048006">
    <property type="protein sequence ID" value="AAN02341.1"/>
    <property type="molecule type" value="Genomic_DNA"/>
</dbReference>
<dbReference type="EMBL" id="AY048007">
    <property type="protein sequence ID" value="AAN02343.1"/>
    <property type="molecule type" value="Genomic_DNA"/>
</dbReference>
<dbReference type="EMBL" id="AY048008">
    <property type="protein sequence ID" value="AAN02345.1"/>
    <property type="molecule type" value="Genomic_DNA"/>
</dbReference>
<dbReference type="EMBL" id="AY048009">
    <property type="protein sequence ID" value="AAN02347.1"/>
    <property type="molecule type" value="Genomic_DNA"/>
</dbReference>
<dbReference type="EMBL" id="AY048010">
    <property type="protein sequence ID" value="AAN02349.1"/>
    <property type="molecule type" value="Genomic_DNA"/>
</dbReference>
<dbReference type="EMBL" id="AY048011">
    <property type="protein sequence ID" value="AAN02351.1"/>
    <property type="molecule type" value="Genomic_DNA"/>
</dbReference>
<dbReference type="EMBL" id="AY048012">
    <property type="protein sequence ID" value="AAN02353.1"/>
    <property type="molecule type" value="Genomic_DNA"/>
</dbReference>
<dbReference type="EMBL" id="AY048013">
    <property type="protein sequence ID" value="AAN02355.1"/>
    <property type="molecule type" value="Genomic_DNA"/>
</dbReference>
<dbReference type="EMBL" id="AY048014">
    <property type="protein sequence ID" value="AAN02357.1"/>
    <property type="molecule type" value="Genomic_DNA"/>
</dbReference>
<dbReference type="EMBL" id="AY048015">
    <property type="protein sequence ID" value="AAN02359.1"/>
    <property type="molecule type" value="Genomic_DNA"/>
</dbReference>
<dbReference type="EMBL" id="AY048016">
    <property type="protein sequence ID" value="AAN02361.1"/>
    <property type="molecule type" value="Genomic_DNA"/>
</dbReference>
<dbReference type="EMBL" id="AY048017">
    <property type="protein sequence ID" value="AAN02363.1"/>
    <property type="molecule type" value="Genomic_DNA"/>
</dbReference>
<dbReference type="EMBL" id="AY048018">
    <property type="protein sequence ID" value="AAN02365.1"/>
    <property type="molecule type" value="Genomic_DNA"/>
</dbReference>
<dbReference type="EMBL" id="AY048019">
    <property type="protein sequence ID" value="AAN02367.1"/>
    <property type="molecule type" value="Genomic_DNA"/>
</dbReference>
<dbReference type="EMBL" id="AY048020">
    <property type="protein sequence ID" value="AAN02369.1"/>
    <property type="molecule type" value="Genomic_DNA"/>
</dbReference>
<dbReference type="EMBL" id="AY048021">
    <property type="protein sequence ID" value="AAN02371.1"/>
    <property type="molecule type" value="Genomic_DNA"/>
</dbReference>
<dbReference type="EMBL" id="AY048022">
    <property type="protein sequence ID" value="AAN02373.1"/>
    <property type="molecule type" value="Genomic_DNA"/>
</dbReference>
<dbReference type="EMBL" id="AY048023">
    <property type="protein sequence ID" value="AAN02375.1"/>
    <property type="molecule type" value="Genomic_DNA"/>
</dbReference>
<dbReference type="EMBL" id="AY048024">
    <property type="protein sequence ID" value="AAN02377.1"/>
    <property type="molecule type" value="Genomic_DNA"/>
</dbReference>
<dbReference type="EMBL" id="AY048025">
    <property type="protein sequence ID" value="AAN02379.1"/>
    <property type="molecule type" value="Genomic_DNA"/>
</dbReference>
<dbReference type="EMBL" id="AY048026">
    <property type="protein sequence ID" value="AAN02381.1"/>
    <property type="molecule type" value="Genomic_DNA"/>
</dbReference>
<dbReference type="EMBL" id="AY048027">
    <property type="protein sequence ID" value="AAN02383.1"/>
    <property type="molecule type" value="Genomic_DNA"/>
</dbReference>
<dbReference type="EMBL" id="AY048028">
    <property type="protein sequence ID" value="AAN02385.1"/>
    <property type="molecule type" value="Genomic_DNA"/>
</dbReference>
<dbReference type="EMBL" id="AY048029">
    <property type="protein sequence ID" value="AAN02387.1"/>
    <property type="molecule type" value="Genomic_DNA"/>
</dbReference>
<dbReference type="EMBL" id="AY048030">
    <property type="protein sequence ID" value="AAN02389.1"/>
    <property type="molecule type" value="Genomic_DNA"/>
</dbReference>
<dbReference type="EMBL" id="AY048031">
    <property type="protein sequence ID" value="AAN02391.1"/>
    <property type="molecule type" value="Genomic_DNA"/>
</dbReference>
<dbReference type="EMBL" id="AY048032">
    <property type="protein sequence ID" value="AAN02393.1"/>
    <property type="molecule type" value="Genomic_DNA"/>
</dbReference>
<dbReference type="EMBL" id="AY048033">
    <property type="protein sequence ID" value="AAN02395.1"/>
    <property type="molecule type" value="Genomic_DNA"/>
</dbReference>
<dbReference type="EMBL" id="AY048034">
    <property type="protein sequence ID" value="AAN02397.1"/>
    <property type="molecule type" value="Genomic_DNA"/>
</dbReference>
<dbReference type="EMBL" id="AY048035">
    <property type="protein sequence ID" value="AAN02399.1"/>
    <property type="molecule type" value="Genomic_DNA"/>
</dbReference>
<dbReference type="EMBL" id="AY048036">
    <property type="protein sequence ID" value="AAN02401.1"/>
    <property type="molecule type" value="Genomic_DNA"/>
</dbReference>
<dbReference type="EMBL" id="AY048037">
    <property type="protein sequence ID" value="AAN02403.1"/>
    <property type="molecule type" value="Genomic_DNA"/>
</dbReference>
<dbReference type="EMBL" id="AY048038">
    <property type="protein sequence ID" value="AAN02405.1"/>
    <property type="molecule type" value="Genomic_DNA"/>
</dbReference>
<dbReference type="EMBL" id="AY048040">
    <property type="protein sequence ID" value="AAN02407.1"/>
    <property type="molecule type" value="Genomic_DNA"/>
</dbReference>
<dbReference type="EMBL" id="AY048041">
    <property type="protein sequence ID" value="AAN02409.1"/>
    <property type="molecule type" value="Genomic_DNA"/>
</dbReference>
<dbReference type="EMBL" id="AY048042">
    <property type="protein sequence ID" value="AAN02411.1"/>
    <property type="molecule type" value="Genomic_DNA"/>
</dbReference>
<dbReference type="PIR" id="A23932">
    <property type="entry name" value="UMFF"/>
</dbReference>
<dbReference type="PIR" id="A26427">
    <property type="entry name" value="A26427"/>
</dbReference>
<dbReference type="PIR" id="A26588">
    <property type="entry name" value="A26588"/>
</dbReference>
<dbReference type="PIR" id="B26427">
    <property type="entry name" value="B26427"/>
</dbReference>
<dbReference type="PIR" id="C26427">
    <property type="entry name" value="C26427"/>
</dbReference>
<dbReference type="PIR" id="S52943">
    <property type="entry name" value="S52943"/>
</dbReference>
<dbReference type="RefSeq" id="NP_001259194.1">
    <property type="nucleotide sequence ID" value="NM_001272265.1"/>
</dbReference>
<dbReference type="RefSeq" id="NP_525056.2">
    <property type="nucleotide sequence ID" value="NM_080317.2"/>
</dbReference>
<dbReference type="PDB" id="1WA9">
    <property type="method" value="X-ray"/>
    <property type="resolution" value="3.15 A"/>
    <property type="chains" value="A/B=232-599"/>
</dbReference>
<dbReference type="PDB" id="3GEC">
    <property type="method" value="X-ray"/>
    <property type="resolution" value="4.00 A"/>
    <property type="chains" value="A=232-538"/>
</dbReference>
<dbReference type="PDB" id="3RTY">
    <property type="method" value="X-ray"/>
    <property type="resolution" value="2.85 A"/>
    <property type="chains" value="A/B/C/D/E/F/G/H=236-574"/>
</dbReference>
<dbReference type="PDB" id="8D7P">
    <property type="method" value="X-ray"/>
    <property type="resolution" value="2.25 A"/>
    <property type="chains" value="C/D=584-601"/>
</dbReference>
<dbReference type="PDBsum" id="1WA9"/>
<dbReference type="PDBsum" id="3GEC"/>
<dbReference type="PDBsum" id="3RTY"/>
<dbReference type="PDBsum" id="8D7P"/>
<dbReference type="SMR" id="P07663"/>
<dbReference type="BioGRID" id="57782">
    <property type="interactions" value="38"/>
</dbReference>
<dbReference type="DIP" id="DIP-29426N"/>
<dbReference type="FunCoup" id="P07663">
    <property type="interactions" value="12"/>
</dbReference>
<dbReference type="IntAct" id="P07663">
    <property type="interactions" value="4"/>
</dbReference>
<dbReference type="STRING" id="7227.FBpp0070455"/>
<dbReference type="GlyGen" id="P07663">
    <property type="glycosylation" value="2 sites, 1 O-linked glycan (1 site)"/>
</dbReference>
<dbReference type="iPTMnet" id="P07663"/>
<dbReference type="PaxDb" id="7227-FBpp0070455"/>
<dbReference type="EnsemblMetazoa" id="FBtr0070477">
    <property type="protein sequence ID" value="FBpp0070455"/>
    <property type="gene ID" value="FBgn0003068"/>
</dbReference>
<dbReference type="GeneID" id="31251"/>
<dbReference type="KEGG" id="dme:Dmel_CG2647"/>
<dbReference type="AGR" id="FB:FBgn0003068"/>
<dbReference type="CTD" id="31251"/>
<dbReference type="FlyBase" id="FBgn0003068">
    <property type="gene designation" value="per"/>
</dbReference>
<dbReference type="VEuPathDB" id="VectorBase:FBgn0003068"/>
<dbReference type="eggNOG" id="KOG3753">
    <property type="taxonomic scope" value="Eukaryota"/>
</dbReference>
<dbReference type="GeneTree" id="ENSGT00940000174107"/>
<dbReference type="HOGENOM" id="CLU_002704_0_0_1"/>
<dbReference type="InParanoid" id="P07663"/>
<dbReference type="OrthoDB" id="7788983at2759"/>
<dbReference type="Reactome" id="R-DME-432395">
    <property type="pathway name" value="Degradation of TIM"/>
</dbReference>
<dbReference type="Reactome" id="R-DME-432490">
    <property type="pathway name" value="Nuclear import of PER and TIM"/>
</dbReference>
<dbReference type="Reactome" id="R-DME-432501">
    <property type="pathway name" value="Transcription repression by PER and activation by PDP1"/>
</dbReference>
<dbReference type="Reactome" id="R-DME-432524">
    <property type="pathway name" value="Degradation of PER"/>
</dbReference>
<dbReference type="Reactome" id="R-DME-432553">
    <property type="pathway name" value="Phosphorylation of PER and TIM"/>
</dbReference>
<dbReference type="Reactome" id="R-DME-432620">
    <property type="pathway name" value="Dephosphorylation of PER"/>
</dbReference>
<dbReference type="Reactome" id="R-DME-538898">
    <property type="pathway name" value="Dephosphorylation of TIM"/>
</dbReference>
<dbReference type="SignaLink" id="P07663"/>
<dbReference type="BioGRID-ORCS" id="31251">
    <property type="hits" value="0 hits in 3 CRISPR screens"/>
</dbReference>
<dbReference type="EvolutionaryTrace" id="P07663"/>
<dbReference type="GenomeRNAi" id="31251"/>
<dbReference type="PRO" id="PR:P07663"/>
<dbReference type="Proteomes" id="UP000000803">
    <property type="component" value="Chromosome X"/>
</dbReference>
<dbReference type="Bgee" id="FBgn0003068">
    <property type="expression patterns" value="Expressed in distal medullary amacrine neuron Dm11 in insect head and 111 other cell types or tissues"/>
</dbReference>
<dbReference type="ExpressionAtlas" id="P07663">
    <property type="expression patterns" value="baseline and differential"/>
</dbReference>
<dbReference type="GO" id="GO:0044297">
    <property type="term" value="C:cell body"/>
    <property type="evidence" value="ECO:0000314"/>
    <property type="project" value="FlyBase"/>
</dbReference>
<dbReference type="GO" id="GO:0005737">
    <property type="term" value="C:cytoplasm"/>
    <property type="evidence" value="ECO:0000314"/>
    <property type="project" value="FlyBase"/>
</dbReference>
<dbReference type="GO" id="GO:0005829">
    <property type="term" value="C:cytosol"/>
    <property type="evidence" value="ECO:0000304"/>
    <property type="project" value="Reactome"/>
</dbReference>
<dbReference type="GO" id="GO:0005654">
    <property type="term" value="C:nucleoplasm"/>
    <property type="evidence" value="ECO:0000304"/>
    <property type="project" value="Reactome"/>
</dbReference>
<dbReference type="GO" id="GO:0005634">
    <property type="term" value="C:nucleus"/>
    <property type="evidence" value="ECO:0000314"/>
    <property type="project" value="FlyBase"/>
</dbReference>
<dbReference type="GO" id="GO:0048471">
    <property type="term" value="C:perinuclear region of cytoplasm"/>
    <property type="evidence" value="ECO:0007669"/>
    <property type="project" value="UniProtKB-SubCell"/>
</dbReference>
<dbReference type="GO" id="GO:0042802">
    <property type="term" value="F:identical protein binding"/>
    <property type="evidence" value="ECO:0000353"/>
    <property type="project" value="IntAct"/>
</dbReference>
<dbReference type="GO" id="GO:0000976">
    <property type="term" value="F:transcription cis-regulatory region binding"/>
    <property type="evidence" value="ECO:0000318"/>
    <property type="project" value="GO_Central"/>
</dbReference>
<dbReference type="GO" id="GO:0003712">
    <property type="term" value="F:transcription coregulator activity"/>
    <property type="evidence" value="ECO:0000303"/>
    <property type="project" value="FlyBase"/>
</dbReference>
<dbReference type="GO" id="GO:0003714">
    <property type="term" value="F:transcription corepressor activity"/>
    <property type="evidence" value="ECO:0000304"/>
    <property type="project" value="FlyBase"/>
</dbReference>
<dbReference type="GO" id="GO:0001222">
    <property type="term" value="F:transcription corepressor binding"/>
    <property type="evidence" value="ECO:0000318"/>
    <property type="project" value="GO_Central"/>
</dbReference>
<dbReference type="GO" id="GO:0048148">
    <property type="term" value="P:behavioral response to cocaine"/>
    <property type="evidence" value="ECO:0000303"/>
    <property type="project" value="FlyBase"/>
</dbReference>
<dbReference type="GO" id="GO:0048512">
    <property type="term" value="P:circadian behavior"/>
    <property type="evidence" value="ECO:0000315"/>
    <property type="project" value="FlyBase"/>
</dbReference>
<dbReference type="GO" id="GO:0032922">
    <property type="term" value="P:circadian regulation of gene expression"/>
    <property type="evidence" value="ECO:0000315"/>
    <property type="project" value="FlyBase"/>
</dbReference>
<dbReference type="GO" id="GO:0007623">
    <property type="term" value="P:circadian rhythm"/>
    <property type="evidence" value="ECO:0000315"/>
    <property type="project" value="FlyBase"/>
</dbReference>
<dbReference type="GO" id="GO:0042745">
    <property type="term" value="P:circadian sleep/wake cycle"/>
    <property type="evidence" value="ECO:0000304"/>
    <property type="project" value="FlyBase"/>
</dbReference>
<dbReference type="GO" id="GO:0060086">
    <property type="term" value="P:circadian temperature homeostasis"/>
    <property type="evidence" value="ECO:0000315"/>
    <property type="project" value="FlyBase"/>
</dbReference>
<dbReference type="GO" id="GO:0007620">
    <property type="term" value="P:copulation"/>
    <property type="evidence" value="ECO:0000315"/>
    <property type="project" value="FlyBase"/>
</dbReference>
<dbReference type="GO" id="GO:0007619">
    <property type="term" value="P:courtship behavior"/>
    <property type="evidence" value="ECO:0000303"/>
    <property type="project" value="FlyBase"/>
</dbReference>
<dbReference type="GO" id="GO:0008340">
    <property type="term" value="P:determination of adult lifespan"/>
    <property type="evidence" value="ECO:0000315"/>
    <property type="project" value="FlyBase"/>
</dbReference>
<dbReference type="GO" id="GO:0008062">
    <property type="term" value="P:eclosion rhythm"/>
    <property type="evidence" value="ECO:0000315"/>
    <property type="project" value="FlyBase"/>
</dbReference>
<dbReference type="GO" id="GO:0009649">
    <property type="term" value="P:entrainment of circadian clock"/>
    <property type="evidence" value="ECO:0000315"/>
    <property type="project" value="FlyBase"/>
</dbReference>
<dbReference type="GO" id="GO:0043153">
    <property type="term" value="P:entrainment of circadian clock by photoperiod"/>
    <property type="evidence" value="ECO:0000315"/>
    <property type="project" value="FlyBase"/>
</dbReference>
<dbReference type="GO" id="GO:0045475">
    <property type="term" value="P:locomotor rhythm"/>
    <property type="evidence" value="ECO:0000315"/>
    <property type="project" value="FlyBase"/>
</dbReference>
<dbReference type="GO" id="GO:0007616">
    <property type="term" value="P:long-term memory"/>
    <property type="evidence" value="ECO:0000315"/>
    <property type="project" value="FlyBase"/>
</dbReference>
<dbReference type="GO" id="GO:0045433">
    <property type="term" value="P:male courtship behavior, veined wing generated song production"/>
    <property type="evidence" value="ECO:0000304"/>
    <property type="project" value="FlyBase"/>
</dbReference>
<dbReference type="GO" id="GO:0007617">
    <property type="term" value="P:mating behavior"/>
    <property type="evidence" value="ECO:0000315"/>
    <property type="project" value="FlyBase"/>
</dbReference>
<dbReference type="GO" id="GO:0045892">
    <property type="term" value="P:negative regulation of DNA-templated transcription"/>
    <property type="evidence" value="ECO:0000314"/>
    <property type="project" value="FlyBase"/>
</dbReference>
<dbReference type="GO" id="GO:0000122">
    <property type="term" value="P:negative regulation of transcription by RNA polymerase II"/>
    <property type="evidence" value="ECO:0000314"/>
    <property type="project" value="FlyBase"/>
</dbReference>
<dbReference type="GO" id="GO:0042752">
    <property type="term" value="P:regulation of circadian rhythm"/>
    <property type="evidence" value="ECO:0000315"/>
    <property type="project" value="FlyBase"/>
</dbReference>
<dbReference type="GO" id="GO:0045187">
    <property type="term" value="P:regulation of circadian sleep/wake cycle, sleep"/>
    <property type="evidence" value="ECO:0000315"/>
    <property type="project" value="FlyBase"/>
</dbReference>
<dbReference type="GO" id="GO:1904059">
    <property type="term" value="P:regulation of locomotor rhythm"/>
    <property type="evidence" value="ECO:0000315"/>
    <property type="project" value="FlyBase"/>
</dbReference>
<dbReference type="GO" id="GO:0009416">
    <property type="term" value="P:response to light stimulus"/>
    <property type="evidence" value="ECO:0000304"/>
    <property type="project" value="FlyBase"/>
</dbReference>
<dbReference type="GO" id="GO:0006979">
    <property type="term" value="P:response to oxidative stress"/>
    <property type="evidence" value="ECO:0000315"/>
    <property type="project" value="FlyBase"/>
</dbReference>
<dbReference type="GO" id="GO:0009266">
    <property type="term" value="P:response to temperature stimulus"/>
    <property type="evidence" value="ECO:0000304"/>
    <property type="project" value="FlyBase"/>
</dbReference>
<dbReference type="GO" id="GO:0007622">
    <property type="term" value="P:rhythmic behavior"/>
    <property type="evidence" value="ECO:0000304"/>
    <property type="project" value="FlyBase"/>
</dbReference>
<dbReference type="CDD" id="cd00130">
    <property type="entry name" value="PAS"/>
    <property type="match status" value="2"/>
</dbReference>
<dbReference type="FunFam" id="1.20.5.770:FF:000001">
    <property type="entry name" value="Period circadian protein"/>
    <property type="match status" value="1"/>
</dbReference>
<dbReference type="FunFam" id="3.30.450.20:FF:000066">
    <property type="entry name" value="Period circadian protein"/>
    <property type="match status" value="1"/>
</dbReference>
<dbReference type="FunFam" id="3.30.450.20:FF:000072">
    <property type="entry name" value="Period circadian protein"/>
    <property type="match status" value="1"/>
</dbReference>
<dbReference type="Gene3D" id="3.30.450.20">
    <property type="entry name" value="PAS domain"/>
    <property type="match status" value="2"/>
</dbReference>
<dbReference type="Gene3D" id="1.20.5.770">
    <property type="entry name" value="Single helix bin"/>
    <property type="match status" value="1"/>
</dbReference>
<dbReference type="IDEAL" id="IID50270"/>
<dbReference type="InterPro" id="IPR000014">
    <property type="entry name" value="PAS"/>
</dbReference>
<dbReference type="InterPro" id="IPR035965">
    <property type="entry name" value="PAS-like_dom_sf"/>
</dbReference>
<dbReference type="InterPro" id="IPR013767">
    <property type="entry name" value="PAS_fold"/>
</dbReference>
<dbReference type="InterPro" id="IPR050760">
    <property type="entry name" value="Period_circadian_regulator"/>
</dbReference>
<dbReference type="PANTHER" id="PTHR11269">
    <property type="entry name" value="PERIOD CIRCADIAN PROTEIN"/>
    <property type="match status" value="1"/>
</dbReference>
<dbReference type="PANTHER" id="PTHR11269:SF16">
    <property type="entry name" value="PERIOD CIRCADIAN PROTEIN"/>
    <property type="match status" value="1"/>
</dbReference>
<dbReference type="Pfam" id="PF00989">
    <property type="entry name" value="PAS"/>
    <property type="match status" value="1"/>
</dbReference>
<dbReference type="Pfam" id="PF14598">
    <property type="entry name" value="PAS_11"/>
    <property type="match status" value="1"/>
</dbReference>
<dbReference type="SMART" id="SM00091">
    <property type="entry name" value="PAS"/>
    <property type="match status" value="2"/>
</dbReference>
<dbReference type="SUPFAM" id="SSF55785">
    <property type="entry name" value="PYP-like sensor domain (PAS domain)"/>
    <property type="match status" value="2"/>
</dbReference>
<dbReference type="PROSITE" id="PS50112">
    <property type="entry name" value="PAS"/>
    <property type="match status" value="2"/>
</dbReference>
<accession>P07663</accession>
<accession>O17483</accession>
<accession>O76882</accession>
<accession>O76883</accession>
<accession>O76884</accession>
<accession>O76885</accession>
<accession>Q24446</accession>
<accession>Q24447</accession>
<accession>Q24448</accession>
<accession>Q24449</accession>
<accession>Q6PVA3</accession>
<accession>Q8MLY0</accession>
<accession>Q9GN20</accession>
<accession>Q9GN51</accession>
<accession>Q9GQH9</accession>
<accession>Q9GV48</accession>
<accession>Q9GV53</accession>
<accession>Q9GV54</accession>
<accession>Q9GV55</accession>
<accession>Q9W4X0</accession>
<reference key="1">
    <citation type="journal article" date="1987" name="Nature">
        <title>A family of unusually spliced biologically active transcripts encoded by a Drosophila clock gene.</title>
        <authorList>
            <person name="Citri Y."/>
            <person name="Colot H.V."/>
            <person name="Jacquier A.C."/>
            <person name="Yu Q."/>
            <person name="Hall J.C."/>
            <person name="Baltimore D."/>
            <person name="Rosbash M."/>
        </authorList>
    </citation>
    <scope>NUCLEOTIDE SEQUENCE [GENOMIC DNA]</scope>
    <scope>ALTERNATIVE SPLICING</scope>
    <source>
        <strain>Oregon-R</strain>
    </source>
</reference>
<reference key="2">
    <citation type="book" date="1993" name="Molecular genetics of biological rhythms">
        <title>Genetic, molecular and cellular studies of the period locus and its products in Drosophila melanogaster.</title>
        <editorList>
            <person name="Young M.W."/>
        </editorList>
        <authorList>
            <person name="Baylies M.K."/>
            <person name="Weiner L."/>
            <person name="Vosshall L.B."/>
            <person name="Saez L."/>
            <person name="Young M.W."/>
        </authorList>
    </citation>
    <scope>NUCLEOTIDE SEQUENCE [MRNA] (ISOFORM PER-A-LONG)</scope>
    <source>
        <strain>Canton-S</strain>
    </source>
</reference>
<reference key="3">
    <citation type="journal article" date="1986" name="Nature">
        <title>Product of per locus of Drosophila shares homology with proteoglycans.</title>
        <authorList>
            <person name="Jackson F.R."/>
            <person name="Bargiello T.A."/>
            <person name="Yun S.-H."/>
            <person name="Young M.W."/>
        </authorList>
    </citation>
    <scope>NUCLEOTIDE SEQUENCE [GENOMIC DNA]</scope>
    <source>
        <strain>Canton-S</strain>
    </source>
</reference>
<reference key="4">
    <citation type="journal article" date="2000" name="Science">
        <title>The genome sequence of Drosophila melanogaster.</title>
        <authorList>
            <person name="Adams M.D."/>
            <person name="Celniker S.E."/>
            <person name="Holt R.A."/>
            <person name="Evans C.A."/>
            <person name="Gocayne J.D."/>
            <person name="Amanatides P.G."/>
            <person name="Scherer S.E."/>
            <person name="Li P.W."/>
            <person name="Hoskins R.A."/>
            <person name="Galle R.F."/>
            <person name="George R.A."/>
            <person name="Lewis S.E."/>
            <person name="Richards S."/>
            <person name="Ashburner M."/>
            <person name="Henderson S.N."/>
            <person name="Sutton G.G."/>
            <person name="Wortman J.R."/>
            <person name="Yandell M.D."/>
            <person name="Zhang Q."/>
            <person name="Chen L.X."/>
            <person name="Brandon R.C."/>
            <person name="Rogers Y.-H.C."/>
            <person name="Blazej R.G."/>
            <person name="Champe M."/>
            <person name="Pfeiffer B.D."/>
            <person name="Wan K.H."/>
            <person name="Doyle C."/>
            <person name="Baxter E.G."/>
            <person name="Helt G."/>
            <person name="Nelson C.R."/>
            <person name="Miklos G.L.G."/>
            <person name="Abril J.F."/>
            <person name="Agbayani A."/>
            <person name="An H.-J."/>
            <person name="Andrews-Pfannkoch C."/>
            <person name="Baldwin D."/>
            <person name="Ballew R.M."/>
            <person name="Basu A."/>
            <person name="Baxendale J."/>
            <person name="Bayraktaroglu L."/>
            <person name="Beasley E.M."/>
            <person name="Beeson K.Y."/>
            <person name="Benos P.V."/>
            <person name="Berman B.P."/>
            <person name="Bhandari D."/>
            <person name="Bolshakov S."/>
            <person name="Borkova D."/>
            <person name="Botchan M.R."/>
            <person name="Bouck J."/>
            <person name="Brokstein P."/>
            <person name="Brottier P."/>
            <person name="Burtis K.C."/>
            <person name="Busam D.A."/>
            <person name="Butler H."/>
            <person name="Cadieu E."/>
            <person name="Center A."/>
            <person name="Chandra I."/>
            <person name="Cherry J.M."/>
            <person name="Cawley S."/>
            <person name="Dahlke C."/>
            <person name="Davenport L.B."/>
            <person name="Davies P."/>
            <person name="de Pablos B."/>
            <person name="Delcher A."/>
            <person name="Deng Z."/>
            <person name="Mays A.D."/>
            <person name="Dew I."/>
            <person name="Dietz S.M."/>
            <person name="Dodson K."/>
            <person name="Doup L.E."/>
            <person name="Downes M."/>
            <person name="Dugan-Rocha S."/>
            <person name="Dunkov B.C."/>
            <person name="Dunn P."/>
            <person name="Durbin K.J."/>
            <person name="Evangelista C.C."/>
            <person name="Ferraz C."/>
            <person name="Ferriera S."/>
            <person name="Fleischmann W."/>
            <person name="Fosler C."/>
            <person name="Gabrielian A.E."/>
            <person name="Garg N.S."/>
            <person name="Gelbart W.M."/>
            <person name="Glasser K."/>
            <person name="Glodek A."/>
            <person name="Gong F."/>
            <person name="Gorrell J.H."/>
            <person name="Gu Z."/>
            <person name="Guan P."/>
            <person name="Harris M."/>
            <person name="Harris N.L."/>
            <person name="Harvey D.A."/>
            <person name="Heiman T.J."/>
            <person name="Hernandez J.R."/>
            <person name="Houck J."/>
            <person name="Hostin D."/>
            <person name="Houston K.A."/>
            <person name="Howland T.J."/>
            <person name="Wei M.-H."/>
            <person name="Ibegwam C."/>
            <person name="Jalali M."/>
            <person name="Kalush F."/>
            <person name="Karpen G.H."/>
            <person name="Ke Z."/>
            <person name="Kennison J.A."/>
            <person name="Ketchum K.A."/>
            <person name="Kimmel B.E."/>
            <person name="Kodira C.D."/>
            <person name="Kraft C.L."/>
            <person name="Kravitz S."/>
            <person name="Kulp D."/>
            <person name="Lai Z."/>
            <person name="Lasko P."/>
            <person name="Lei Y."/>
            <person name="Levitsky A.A."/>
            <person name="Li J.H."/>
            <person name="Li Z."/>
            <person name="Liang Y."/>
            <person name="Lin X."/>
            <person name="Liu X."/>
            <person name="Mattei B."/>
            <person name="McIntosh T.C."/>
            <person name="McLeod M.P."/>
            <person name="McPherson D."/>
            <person name="Merkulov G."/>
            <person name="Milshina N.V."/>
            <person name="Mobarry C."/>
            <person name="Morris J."/>
            <person name="Moshrefi A."/>
            <person name="Mount S.M."/>
            <person name="Moy M."/>
            <person name="Murphy B."/>
            <person name="Murphy L."/>
            <person name="Muzny D.M."/>
            <person name="Nelson D.L."/>
            <person name="Nelson D.R."/>
            <person name="Nelson K.A."/>
            <person name="Nixon K."/>
            <person name="Nusskern D.R."/>
            <person name="Pacleb J.M."/>
            <person name="Palazzolo M."/>
            <person name="Pittman G.S."/>
            <person name="Pan S."/>
            <person name="Pollard J."/>
            <person name="Puri V."/>
            <person name="Reese M.G."/>
            <person name="Reinert K."/>
            <person name="Remington K."/>
            <person name="Saunders R.D.C."/>
            <person name="Scheeler F."/>
            <person name="Shen H."/>
            <person name="Shue B.C."/>
            <person name="Siden-Kiamos I."/>
            <person name="Simpson M."/>
            <person name="Skupski M.P."/>
            <person name="Smith T.J."/>
            <person name="Spier E."/>
            <person name="Spradling A.C."/>
            <person name="Stapleton M."/>
            <person name="Strong R."/>
            <person name="Sun E."/>
            <person name="Svirskas R."/>
            <person name="Tector C."/>
            <person name="Turner R."/>
            <person name="Venter E."/>
            <person name="Wang A.H."/>
            <person name="Wang X."/>
            <person name="Wang Z.-Y."/>
            <person name="Wassarman D.A."/>
            <person name="Weinstock G.M."/>
            <person name="Weissenbach J."/>
            <person name="Williams S.M."/>
            <person name="Woodage T."/>
            <person name="Worley K.C."/>
            <person name="Wu D."/>
            <person name="Yang S."/>
            <person name="Yao Q.A."/>
            <person name="Ye J."/>
            <person name="Yeh R.-F."/>
            <person name="Zaveri J.S."/>
            <person name="Zhan M."/>
            <person name="Zhang G."/>
            <person name="Zhao Q."/>
            <person name="Zheng L."/>
            <person name="Zheng X.H."/>
            <person name="Zhong F.N."/>
            <person name="Zhong W."/>
            <person name="Zhou X."/>
            <person name="Zhu S.C."/>
            <person name="Zhu X."/>
            <person name="Smith H.O."/>
            <person name="Gibbs R.A."/>
            <person name="Myers E.W."/>
            <person name="Rubin G.M."/>
            <person name="Venter J.C."/>
        </authorList>
    </citation>
    <scope>NUCLEOTIDE SEQUENCE [LARGE SCALE GENOMIC DNA] (ALLELE (GLY-THR)20)</scope>
    <scope>VARIANT 697-GLY--THR-702 DEL</scope>
    <source>
        <strain>Berkeley</strain>
    </source>
</reference>
<reference key="5">
    <citation type="journal article" date="2002" name="Genome Biol.">
        <title>Annotation of the Drosophila melanogaster euchromatic genome: a systematic review.</title>
        <authorList>
            <person name="Misra S."/>
            <person name="Crosby M.A."/>
            <person name="Mungall C.J."/>
            <person name="Matthews B.B."/>
            <person name="Campbell K.S."/>
            <person name="Hradecky P."/>
            <person name="Huang Y."/>
            <person name="Kaminker J.S."/>
            <person name="Millburn G.H."/>
            <person name="Prochnik S.E."/>
            <person name="Smith C.D."/>
            <person name="Tupy J.L."/>
            <person name="Whitfield E.J."/>
            <person name="Bayraktaroglu L."/>
            <person name="Berman B.P."/>
            <person name="Bettencourt B.R."/>
            <person name="Celniker S.E."/>
            <person name="de Grey A.D.N.J."/>
            <person name="Drysdale R.A."/>
            <person name="Harris N.L."/>
            <person name="Richter J."/>
            <person name="Russo S."/>
            <person name="Schroeder A.J."/>
            <person name="Shu S.Q."/>
            <person name="Stapleton M."/>
            <person name="Yamada C."/>
            <person name="Ashburner M."/>
            <person name="Gelbart W.M."/>
            <person name="Rubin G.M."/>
            <person name="Lewis S.E."/>
        </authorList>
    </citation>
    <scope>GENOME REANNOTATION</scope>
    <source>
        <strain>Berkeley</strain>
    </source>
</reference>
<reference key="6">
    <citation type="journal article" date="2000" name="Science">
        <title>From sequence to chromosome: the tip of the X chromosome of D. melanogaster.</title>
        <authorList>
            <person name="Benos P.V."/>
            <person name="Gatt M.K."/>
            <person name="Ashburner M."/>
            <person name="Murphy L."/>
            <person name="Harris D."/>
            <person name="Barrell B.G."/>
            <person name="Ferraz C."/>
            <person name="Vidal S."/>
            <person name="Brun C."/>
            <person name="Demailles J."/>
            <person name="Cadieu E."/>
            <person name="Dreano S."/>
            <person name="Gloux S."/>
            <person name="Lelaure V."/>
            <person name="Mottier S."/>
            <person name="Galibert F."/>
            <person name="Borkova D."/>
            <person name="Minana B."/>
            <person name="Kafatos F.C."/>
            <person name="Louis C."/>
            <person name="Siden-Kiamos I."/>
            <person name="Bolshakov S."/>
            <person name="Papagiannakis G."/>
            <person name="Spanos L."/>
            <person name="Cox S."/>
            <person name="Madueno E."/>
            <person name="de Pablos B."/>
            <person name="Modolell J."/>
            <person name="Peter A."/>
            <person name="Schoettler P."/>
            <person name="Werner M."/>
            <person name="Mourkioti F."/>
            <person name="Beinert N."/>
            <person name="Dowe G."/>
            <person name="Schaefer U."/>
            <person name="Jaeckle H."/>
            <person name="Bucheton A."/>
            <person name="Callister D.M."/>
            <person name="Campbell L.A."/>
            <person name="Darlamitsou A."/>
            <person name="Henderson N.S."/>
            <person name="McMillan P.J."/>
            <person name="Salles C."/>
            <person name="Tait E.A."/>
            <person name="Valenti P."/>
            <person name="Saunders R.D.C."/>
            <person name="Glover D.M."/>
        </authorList>
    </citation>
    <scope>NUCLEOTIDE SEQUENCE [LARGE SCALE GENOMIC DNA]</scope>
    <scope>ALTERNATIVE SPLICING</scope>
    <source>
        <strain>Oregon-R</strain>
    </source>
</reference>
<reference key="7">
    <citation type="journal article" date="2004" name="Mol. Phylogenet. Evol.">
        <title>Linking phylogenetics with population genetics to reconstruct the geographic origin of a species.</title>
        <authorList>
            <person name="Dean M.D."/>
            <person name="Ballard J.W.O."/>
        </authorList>
    </citation>
    <scope>NUCLEOTIDE SEQUENCE [GENOMIC DNA] OF 5-609</scope>
    <source>
        <strain>Oregon-R</strain>
    </source>
</reference>
<reference key="8">
    <citation type="journal article" date="1993" name="Genetics">
        <title>DNA sequence variation at the period locus within and among species of the Drosophila melanogaster complex.</title>
        <authorList>
            <person name="Kliman R.M."/>
            <person name="Hey J."/>
        </authorList>
    </citation>
    <scope>NUCLEOTIDE SEQUENCE [GENOMIC DNA] OF 14-573</scope>
</reference>
<reference key="9">
    <citation type="submission" date="1999-06" db="EMBL/GenBank/DDBJ databases">
        <title>Population structure and founder effect in the colonization of D.simulans based on DNA sequence variation in the Drosophila clock gene period.</title>
        <authorList>
            <person name="Horio A.T."/>
            <person name="Date A."/>
            <person name="Noda R."/>
            <person name="Tajima F."/>
            <person name="Chigusa S.I."/>
            <person name="Kondo R."/>
        </authorList>
    </citation>
    <scope>NUCLEOTIDE SEQUENCE [GENOMIC DNA] OF 243-400; 744-926 AND 1076-1218</scope>
    <source>
        <strain>L18</strain>
        <strain>SP1</strain>
        <strain>U79</strain>
    </source>
</reference>
<reference key="10">
    <citation type="journal article" date="1986" name="Cell">
        <title>The period clock locus of D. melanogaster codes for a proteoglycan.</title>
        <authorList>
            <person name="Reddy P."/>
            <person name="Jacquier A.C."/>
            <person name="Abovich N."/>
            <person name="Petersen G."/>
            <person name="Rosbash M."/>
        </authorList>
    </citation>
    <scope>NUCLEOTIDE SEQUENCE [LARGE SCALE GENOMIC DNA] OF 499-1075 (ALLELE (GLY-THR)20)</scope>
    <scope>VARIANT 697-GLY--THR-702 DEL</scope>
    <source>
        <strain>Oregon-R</strain>
    </source>
</reference>
<reference key="11">
    <citation type="journal article" date="2000" name="Proc. R. Soc. B">
        <title>Evolutionary novelties in islands: Drosophila santomea, a new melanogaster sister species from Sao Tome.</title>
        <authorList>
            <person name="Lachaise D."/>
            <person name="Harry M."/>
            <person name="Solignac M."/>
            <person name="Lemeunier F."/>
            <person name="Benassi V."/>
            <person name="Cariou M.L."/>
        </authorList>
    </citation>
    <scope>NUCLEOTIDE SEQUENCE [LARGE SCALE GENOMIC DNA] OF 683-932 (ALLELE (GLY-THR)20)</scope>
    <scope>VARIANT 697-GLY--THR-702 DEL</scope>
</reference>
<reference key="12">
    <citation type="journal article" date="2002" name="Proc. Natl. Acad. Sci. U.S.A.">
        <title>Hitchhiking mapping: a population-based fine-mapping strategy for adaptive mutations in Drosophilamelanogaster.</title>
        <authorList>
            <person name="Harr B."/>
            <person name="Kauer M."/>
            <person name="Schloetterer C."/>
        </authorList>
    </citation>
    <scope>NUCLEOTIDE SEQUENCE [GENOMIC DNA] OF 1155-1224</scope>
    <source>
        <strain>AF1</strain>
        <strain>AF2</strain>
        <strain>AF3</strain>
        <strain>AF4</strain>
        <strain>K1</strain>
        <strain>K11</strain>
        <strain>K13</strain>
        <strain>K14</strain>
        <strain>K16</strain>
        <strain>K17</strain>
        <strain>K2</strain>
        <strain>K20</strain>
        <strain>K21</strain>
        <strain>K3</strain>
        <strain>K5</strain>
        <strain>K7</strain>
        <strain>K9</strain>
        <strain>Wi1</strain>
        <strain>Wi10</strain>
        <strain>Wi12</strain>
        <strain>Wi13</strain>
        <strain>Wi14</strain>
        <strain>Wi15</strain>
        <strain>Wi16</strain>
        <strain>Wi17</strain>
        <strain>Wi18</strain>
        <strain>Wi19</strain>
        <strain>Wi2</strain>
        <strain>Wi21</strain>
        <strain>Wi22</strain>
        <strain>Wi23</strain>
        <strain>Wi24</strain>
        <strain>Wi25</strain>
        <strain>Wi27</strain>
        <strain>Wi28</strain>
        <strain>Wi29</strain>
        <strain>Wi3</strain>
        <strain>Wi30</strain>
        <strain>Wi31</strain>
        <strain>Wi32</strain>
        <strain>Wi33</strain>
        <strain>Wi4</strain>
        <strain>Wi5</strain>
        <strain>Wi6</strain>
        <strain>Wi7</strain>
        <strain>Wi8</strain>
        <strain>Wi9</strain>
        <strain>ZH1</strain>
        <strain>ZH13</strain>
        <strain>ZH16</strain>
        <strain>ZH18</strain>
        <strain>ZH19</strain>
        <strain>ZH2</strain>
        <strain>ZH20</strain>
        <strain>ZH21</strain>
        <strain>ZH23</strain>
        <strain>ZH25</strain>
        <strain>ZH29</strain>
        <strain>ZH31</strain>
        <strain>ZH33</strain>
        <strain>ZH35</strain>
        <strain>ZH36</strain>
    </source>
</reference>
<reference key="13">
    <citation type="journal article" date="1994" name="Proc. Natl. Acad. Sci. U.S.A.">
        <title>Temporal phosphorylation of the Drosophila period protein.</title>
        <authorList>
            <person name="Edery I."/>
            <person name="Zwiebel L.J."/>
            <person name="Dembinska M.E."/>
            <person name="Rosbash M."/>
        </authorList>
    </citation>
    <scope>PHOSPHORYLATION</scope>
</reference>
<reference key="14">
    <citation type="journal article" date="2013" name="Neuron">
        <title>Noncanonical FK506-binding protein BDBT binds DBT to enhance its circadian function and forms foci at night.</title>
        <authorList>
            <person name="Fan J.Y."/>
            <person name="Agyekum B."/>
            <person name="Venkatesan A."/>
            <person name="Hall D.R."/>
            <person name="Keightley A."/>
            <person name="Bjes E.S."/>
            <person name="Bouyain S."/>
            <person name="Price J.L."/>
        </authorList>
    </citation>
    <scope>SUBCELLULAR LOCATION</scope>
</reference>
<reference key="15">
    <citation type="journal article" date="2016" name="PLoS Genet.">
        <title>CLOCKWORK ORANGE enhances PERIOD mediated rhythms in transcriptional repression by antagonizing E-box binding by CLOCK-CYCLE.</title>
        <authorList>
            <person name="Zhou J."/>
            <person name="Yu W."/>
            <person name="Hardin P.E."/>
        </authorList>
    </citation>
    <scope>FUNCTION</scope>
</reference>
<reference key="16">
    <citation type="journal article" date="2018" name="Front. Physiol.">
        <title>The CCHamide1 Neuropeptide Expressed in the Anterior Dorsal Neuron 1 Conveys a Circadian Signal to the Ventral Lateral Neurons in Drosophila melanogaster.</title>
        <authorList>
            <person name="Fujiwara Y."/>
            <person name="Hermann-Luibl C."/>
            <person name="Katsura M."/>
            <person name="Sekiguchi M."/>
            <person name="Ida T."/>
            <person name="Helfrich-Foerster C."/>
            <person name="Yoshii T."/>
        </authorList>
    </citation>
    <scope>DISRUPTION PHENOTYPE</scope>
</reference>
<reference key="17">
    <citation type="journal article" date="2023" name="IScience">
        <title>Visual and circadian regulation of Drosophila BDBT and BDBT effects on DBT and PER localization.</title>
        <authorList>
            <person name="Nolan R.B."/>
            <person name="Bontrager C."/>
            <person name="Bowser A."/>
            <person name="Corley A."/>
            <person name="Fiedler H."/>
            <person name="Flathers C."/>
            <person name="Francis L."/>
            <person name="Le A."/>
            <person name="Mahmoudjafari S."/>
            <person name="Nim T."/>
            <person name="Muolo C.E."/>
            <person name="Shores B."/>
            <person name="Viermann C."/>
            <person name="Waldren A."/>
            <person name="Zatezalo C."/>
            <person name="Fan J.Y."/>
            <person name="Price J.L."/>
        </authorList>
    </citation>
    <scope>SUBCELLULAR LOCATION</scope>
</reference>
<reference key="18">
    <citation type="journal article" date="2005" name="Mol. Cell">
        <title>Crystal structure and interactions of the PAS repeat region of the Drosophila clock protein PERIOD.</title>
        <authorList>
            <person name="Yildiz O."/>
            <person name="Doi M."/>
            <person name="Yujnovsky I."/>
            <person name="Cardone L."/>
            <person name="Berndt A."/>
            <person name="Hennig S."/>
            <person name="Schulze S."/>
            <person name="Urbanke C."/>
            <person name="Sassone-Corsi P."/>
            <person name="Wolf E."/>
        </authorList>
    </citation>
    <scope>X-RAY CRYSTALLOGRAPHY (3.15 ANGSTROMS) OF 232-599</scope>
    <scope>SUBCELLULAR LOCATION</scope>
    <scope>SUBUNIT</scope>
</reference>
<feature type="chain" id="PRO_0000162596" description="Period circadian protein">
    <location>
        <begin position="1"/>
        <end position="1224"/>
    </location>
</feature>
<feature type="domain" description="PAS 1" evidence="2">
    <location>
        <begin position="238"/>
        <end position="373"/>
    </location>
</feature>
<feature type="domain" description="PAS 2" evidence="2">
    <location>
        <begin position="391"/>
        <end position="497"/>
    </location>
</feature>
<feature type="repeat" description="1">
    <location>
        <begin position="694"/>
        <end position="695"/>
    </location>
</feature>
<feature type="repeat" description="2">
    <location>
        <begin position="697"/>
        <end position="698"/>
    </location>
</feature>
<feature type="repeat" description="3">
    <location>
        <begin position="699"/>
        <end position="700"/>
    </location>
</feature>
<feature type="repeat" description="4">
    <location>
        <begin position="701"/>
        <end position="702"/>
    </location>
</feature>
<feature type="repeat" description="5">
    <location>
        <begin position="703"/>
        <end position="704"/>
    </location>
</feature>
<feature type="repeat" description="6">
    <location>
        <begin position="705"/>
        <end position="706"/>
    </location>
</feature>
<feature type="repeat" description="7">
    <location>
        <begin position="707"/>
        <end position="708"/>
    </location>
</feature>
<feature type="repeat" description="8">
    <location>
        <begin position="709"/>
        <end position="710"/>
    </location>
</feature>
<feature type="repeat" description="9">
    <location>
        <begin position="711"/>
        <end position="712"/>
    </location>
</feature>
<feature type="repeat" description="10">
    <location>
        <begin position="713"/>
        <end position="714"/>
    </location>
</feature>
<feature type="repeat" description="11">
    <location>
        <begin position="715"/>
        <end position="716"/>
    </location>
</feature>
<feature type="repeat" description="12">
    <location>
        <begin position="717"/>
        <end position="718"/>
    </location>
</feature>
<feature type="repeat" description="13">
    <location>
        <begin position="719"/>
        <end position="720"/>
    </location>
</feature>
<feature type="repeat" description="14">
    <location>
        <begin position="721"/>
        <end position="722"/>
    </location>
</feature>
<feature type="repeat" description="15">
    <location>
        <begin position="723"/>
        <end position="724"/>
    </location>
</feature>
<feature type="repeat" description="16">
    <location>
        <begin position="725"/>
        <end position="726"/>
    </location>
</feature>
<feature type="repeat" description="17">
    <location>
        <begin position="727"/>
        <end position="728"/>
    </location>
</feature>
<feature type="repeat" description="18">
    <location>
        <begin position="729"/>
        <end position="730"/>
    </location>
</feature>
<feature type="repeat" description="19">
    <location>
        <begin position="731"/>
        <end position="732"/>
    </location>
</feature>
<feature type="repeat" description="20">
    <location>
        <begin position="733"/>
        <end position="734"/>
    </location>
</feature>
<feature type="repeat" description="21">
    <location>
        <begin position="735"/>
        <end position="736"/>
    </location>
</feature>
<feature type="repeat" description="22">
    <location>
        <begin position="737"/>
        <end position="738"/>
    </location>
</feature>
<feature type="repeat" description="23">
    <location>
        <begin position="739"/>
        <end position="740"/>
    </location>
</feature>
<feature type="repeat" description="24">
    <location>
        <begin position="741"/>
        <end position="742"/>
    </location>
</feature>
<feature type="repeat" description="25">
    <location>
        <begin position="743"/>
        <end position="744"/>
    </location>
</feature>
<feature type="repeat" description="26">
    <location>
        <begin position="745"/>
        <end position="746"/>
    </location>
</feature>
<feature type="repeat" description="27; approximate">
    <location>
        <begin position="747"/>
        <end position="748"/>
    </location>
</feature>
<feature type="repeat" description="28">
    <location>
        <begin position="749"/>
        <end position="750"/>
    </location>
</feature>
<feature type="repeat" description="29">
    <location>
        <begin position="751"/>
        <end position="752"/>
    </location>
</feature>
<feature type="repeat" description="30">
    <location>
        <begin position="753"/>
        <end position="754"/>
    </location>
</feature>
<feature type="region of interest" description="Disordered" evidence="3">
    <location>
        <begin position="1"/>
        <end position="175"/>
    </location>
</feature>
<feature type="region of interest" description="Disordered" evidence="3">
    <location>
        <begin position="632"/>
        <end position="764"/>
    </location>
</feature>
<feature type="region of interest" description="30 X 2 AA approximate tandem repeats of G-[TN]">
    <location>
        <begin position="694"/>
        <end position="754"/>
    </location>
</feature>
<feature type="region of interest" description="Regulates the rhythm of species-specific courtship song">
    <location>
        <begin position="749"/>
        <end position="868"/>
    </location>
</feature>
<feature type="region of interest" description="Disordered" evidence="3">
    <location>
        <begin position="788"/>
        <end position="807"/>
    </location>
</feature>
<feature type="region of interest" description="Disordered" evidence="3">
    <location>
        <begin position="874"/>
        <end position="927"/>
    </location>
</feature>
<feature type="region of interest" description="Disordered" evidence="3">
    <location>
        <begin position="978"/>
        <end position="1008"/>
    </location>
</feature>
<feature type="region of interest" description="Disordered" evidence="3">
    <location>
        <begin position="1094"/>
        <end position="1224"/>
    </location>
</feature>
<feature type="short sequence motif" description="Nuclear localization signal" evidence="1">
    <location>
        <begin position="66"/>
        <end position="79"/>
    </location>
</feature>
<feature type="compositionally biased region" description="Polar residues" evidence="3">
    <location>
        <begin position="1"/>
        <end position="15"/>
    </location>
</feature>
<feature type="compositionally biased region" description="Low complexity" evidence="3">
    <location>
        <begin position="16"/>
        <end position="47"/>
    </location>
</feature>
<feature type="compositionally biased region" description="Basic residues" evidence="3">
    <location>
        <begin position="66"/>
        <end position="79"/>
    </location>
</feature>
<feature type="compositionally biased region" description="Basic and acidic residues" evidence="3">
    <location>
        <begin position="121"/>
        <end position="133"/>
    </location>
</feature>
<feature type="compositionally biased region" description="Polar residues" evidence="3">
    <location>
        <begin position="675"/>
        <end position="693"/>
    </location>
</feature>
<feature type="compositionally biased region" description="Gly residues" evidence="3">
    <location>
        <begin position="694"/>
        <end position="752"/>
    </location>
</feature>
<feature type="compositionally biased region" description="Basic and acidic residues" evidence="3">
    <location>
        <begin position="794"/>
        <end position="805"/>
    </location>
</feature>
<feature type="compositionally biased region" description="Gly residues" evidence="3">
    <location>
        <begin position="895"/>
        <end position="907"/>
    </location>
</feature>
<feature type="compositionally biased region" description="Low complexity" evidence="3">
    <location>
        <begin position="908"/>
        <end position="927"/>
    </location>
</feature>
<feature type="compositionally biased region" description="Polar residues" evidence="3">
    <location>
        <begin position="1094"/>
        <end position="1117"/>
    </location>
</feature>
<feature type="compositionally biased region" description="Polar residues" evidence="3">
    <location>
        <begin position="1143"/>
        <end position="1154"/>
    </location>
</feature>
<feature type="compositionally biased region" description="Low complexity" evidence="3">
    <location>
        <begin position="1158"/>
        <end position="1177"/>
    </location>
</feature>
<feature type="compositionally biased region" description="Basic and acidic residues" evidence="3">
    <location>
        <begin position="1209"/>
        <end position="1224"/>
    </location>
</feature>
<feature type="splice variant" id="VSP_004657" description="In isoform PER-A-short." evidence="13">
    <location>
        <begin position="1"/>
        <end position="62"/>
    </location>
</feature>
<feature type="splice variant" id="VSP_004659" description="In isoform PER-D and isoform PER-E." evidence="13">
    <location>
        <begin position="863"/>
        <end position="958"/>
    </location>
</feature>
<feature type="splice variant" id="VSP_004658" description="In isoform PER-B." evidence="13">
    <location>
        <begin position="868"/>
        <end position="963"/>
    </location>
</feature>
<feature type="splice variant" id="VSP_004660" description="In isoform PER-C." evidence="13">
    <original>TTPASMTKKVPGAFHSVTTPAQVQRPSSQSASVKTEPGSSAAVSDPCKKEVPDSSPIPSVMGDYNSDPPCSSSNPANNKKYTDSNGNSDDMDGSSFSSFYSSFIKTTDGSESPPDTEKDPKHRKLKSMSTSESKIMEHPEEDQTQHGDG</original>
    <variation>VSQWPVVPHRTVLTPTPTPYSSIDHAGVHDEEGAGCIPLGHHSCPGAASLLAERIRQDGAGLQCSGIRSLQEGGAGLLAHSLRDGRLQLRPALQQQQSRQQQGMLYE</variation>
    <location>
        <begin position="1076"/>
        <end position="1224"/>
    </location>
</feature>
<feature type="splice variant" id="VSP_004661" description="In isoform PER-E." evidence="13">
    <original>KYTDSNGNSDDMDGSSFSSFYSSFIKTTDGSESPPDTEKDPKHRKLKSMSTSESKIMEHPEEDQTQHGDG</original>
    <variation>VCYTNEVHW</variation>
    <location>
        <begin position="1155"/>
        <end position="1224"/>
    </location>
</feature>
<feature type="sequence variant" description="In allele (Gly-Thr)17.">
    <location>
        <begin position="697"/>
        <end position="708"/>
    </location>
</feature>
<feature type="sequence variant" description="In allele (Gly-Thr)20." evidence="4 5 10">
    <location>
        <begin position="697"/>
        <end position="702"/>
    </location>
</feature>
<feature type="sequence variant" description="In strain: U79.">
    <original>S</original>
    <variation>F</variation>
    <location>
        <position position="748"/>
    </location>
</feature>
<feature type="sequence variant" description="In strain: Berkeley, L18, Oregon-R, SP1 and U79.">
    <original>T</original>
    <variation>S</variation>
    <location>
        <position position="762"/>
    </location>
</feature>
<feature type="sequence variant" description="In strain: U79.">
    <original>A</original>
    <variation>T</variation>
    <location>
        <position position="846"/>
    </location>
</feature>
<feature type="sequence variant" description="In strain: L18 and U79.">
    <original>V</original>
    <variation>A</variation>
    <location>
        <position position="858"/>
    </location>
</feature>
<feature type="sequence variant" description="In strain: L18.">
    <original>S</original>
    <variation>P</variation>
    <location>
        <position position="1176"/>
    </location>
</feature>
<feature type="sequence conflict" description="In Ref. 8; AAA28777." evidence="13" ref="8">
    <original>G</original>
    <variation>V</variation>
    <location>
        <position position="211"/>
    </location>
</feature>
<feature type="sequence conflict" description="In Ref. 8; AAA28777." evidence="13" ref="8">
    <original>GP</original>
    <variation>A</variation>
    <location>
        <begin position="498"/>
        <end position="499"/>
    </location>
</feature>
<feature type="sequence conflict" description="In Ref. 10." evidence="13" ref="10">
    <original>E</original>
    <variation>A</variation>
    <location>
        <position position="637"/>
    </location>
</feature>
<feature type="sequence conflict" description="In Ref. 3." evidence="13" ref="3">
    <location>
        <begin position="733"/>
        <end position="767"/>
    </location>
</feature>
<feature type="sequence conflict" description="In Ref. 3 and 10." evidence="13" ref="3 10">
    <original>TAA</original>
    <variation>RR</variation>
    <location>
        <begin position="762"/>
        <end position="764"/>
    </location>
</feature>
<feature type="sequence conflict" description="In Ref. 10." evidence="13" ref="10">
    <original>L</original>
    <variation>V</variation>
    <location>
        <position position="1029"/>
    </location>
</feature>
<feature type="sequence conflict" description="In Ref. 10." evidence="13" ref="10">
    <original>A</original>
    <variation>P</variation>
    <location>
        <position position="1038"/>
    </location>
</feature>
<feature type="sequence conflict" description="In Ref. 6; CAA19677." evidence="13" ref="6">
    <original>T</original>
    <variation>TVSQWPV</variation>
    <location>
        <position position="1075"/>
    </location>
</feature>
<feature type="sequence conflict" description="In Ref. 1." evidence="13" ref="1">
    <original>S</original>
    <variation>F</variation>
    <location>
        <position position="1114"/>
    </location>
</feature>
<feature type="sequence conflict" description="In Ref. 1." evidence="13" ref="1">
    <original>E</original>
    <variation>D</variation>
    <location>
        <position position="1215"/>
    </location>
</feature>
<feature type="strand" evidence="15">
    <location>
        <begin position="240"/>
        <end position="245"/>
    </location>
</feature>
<feature type="turn" evidence="15">
    <location>
        <begin position="246"/>
        <end position="248"/>
    </location>
</feature>
<feature type="strand" evidence="15">
    <location>
        <begin position="250"/>
        <end position="254"/>
    </location>
</feature>
<feature type="helix" evidence="15">
    <location>
        <begin position="258"/>
        <end position="262"/>
    </location>
</feature>
<feature type="helix" evidence="15">
    <location>
        <begin position="274"/>
        <end position="277"/>
    </location>
</feature>
<feature type="helix" evidence="15">
    <location>
        <begin position="280"/>
        <end position="282"/>
    </location>
</feature>
<feature type="helix" evidence="15">
    <location>
        <begin position="283"/>
        <end position="291"/>
    </location>
</feature>
<feature type="strand" evidence="15">
    <location>
        <begin position="310"/>
        <end position="316"/>
    </location>
</feature>
<feature type="strand" evidence="14">
    <location>
        <begin position="326"/>
        <end position="328"/>
    </location>
</feature>
<feature type="strand" evidence="15">
    <location>
        <begin position="335"/>
        <end position="346"/>
    </location>
</feature>
<feature type="strand" evidence="15">
    <location>
        <begin position="352"/>
        <end position="354"/>
    </location>
</feature>
<feature type="strand" evidence="15">
    <location>
        <begin position="364"/>
        <end position="372"/>
    </location>
</feature>
<feature type="strand" evidence="15">
    <location>
        <begin position="390"/>
        <end position="396"/>
    </location>
</feature>
<feature type="strand" evidence="15">
    <location>
        <begin position="400"/>
        <end position="404"/>
    </location>
</feature>
<feature type="helix" evidence="15">
    <location>
        <begin position="408"/>
        <end position="412"/>
    </location>
</feature>
<feature type="helix" evidence="15">
    <location>
        <begin position="416"/>
        <end position="419"/>
    </location>
</feature>
<feature type="helix" evidence="15">
    <location>
        <begin position="424"/>
        <end position="427"/>
    </location>
</feature>
<feature type="helix" evidence="15">
    <location>
        <begin position="430"/>
        <end position="432"/>
    </location>
</feature>
<feature type="helix" evidence="15">
    <location>
        <begin position="433"/>
        <end position="446"/>
    </location>
</feature>
<feature type="strand" evidence="15">
    <location>
        <begin position="459"/>
        <end position="462"/>
    </location>
</feature>
<feature type="strand" evidence="15">
    <location>
        <begin position="468"/>
        <end position="479"/>
    </location>
</feature>
<feature type="turn" evidence="15">
    <location>
        <begin position="481"/>
        <end position="483"/>
    </location>
</feature>
<feature type="strand" evidence="15">
    <location>
        <begin position="485"/>
        <end position="497"/>
    </location>
</feature>
<feature type="strand" evidence="15">
    <location>
        <begin position="500"/>
        <end position="502"/>
    </location>
</feature>
<feature type="strand" evidence="15">
    <location>
        <begin position="504"/>
        <end position="507"/>
    </location>
</feature>
<feature type="helix" evidence="15">
    <location>
        <begin position="516"/>
        <end position="535"/>
    </location>
</feature>
<feature type="turn" evidence="15">
    <location>
        <begin position="544"/>
        <end position="550"/>
    </location>
</feature>
<feature type="helix" evidence="15">
    <location>
        <begin position="554"/>
        <end position="573"/>
    </location>
</feature>
<keyword id="KW-0002">3D-structure</keyword>
<keyword id="KW-0025">Alternative splicing</keyword>
<keyword id="KW-0090">Biological rhythms</keyword>
<keyword id="KW-0963">Cytoplasm</keyword>
<keyword id="KW-0539">Nucleus</keyword>
<keyword id="KW-0597">Phosphoprotein</keyword>
<keyword id="KW-1185">Reference proteome</keyword>
<keyword id="KW-0677">Repeat</keyword>
<gene>
    <name type="primary">per</name>
    <name type="ORF">CG2647</name>
</gene>